<reference key="1">
    <citation type="submission" date="2009-06" db="EMBL/GenBank/DDBJ databases">
        <title>Complete sequence of Desulfovibrio salexigens DSM 2638.</title>
        <authorList>
            <consortium name="US DOE Joint Genome Institute"/>
            <person name="Lucas S."/>
            <person name="Copeland A."/>
            <person name="Lapidus A."/>
            <person name="Glavina del Rio T."/>
            <person name="Tice H."/>
            <person name="Bruce D."/>
            <person name="Goodwin L."/>
            <person name="Pitluck S."/>
            <person name="Munk A.C."/>
            <person name="Brettin T."/>
            <person name="Detter J.C."/>
            <person name="Han C."/>
            <person name="Tapia R."/>
            <person name="Larimer F."/>
            <person name="Land M."/>
            <person name="Hauser L."/>
            <person name="Kyrpides N."/>
            <person name="Anderson I."/>
            <person name="Wall J.D."/>
            <person name="Arkin A.P."/>
            <person name="Dehal P."/>
            <person name="Chivian D."/>
            <person name="Giles B."/>
            <person name="Hazen T.C."/>
        </authorList>
    </citation>
    <scope>NUCLEOTIDE SEQUENCE [LARGE SCALE GENOMIC DNA]</scope>
    <source>
        <strain>ATCC 14822 / DSM 2638 / NCIMB 8403 / VKM B-1763</strain>
    </source>
</reference>
<dbReference type="EC" id="1.7.2.2" evidence="1"/>
<dbReference type="EMBL" id="CP001649">
    <property type="protein sequence ID" value="ACS78816.1"/>
    <property type="molecule type" value="Genomic_DNA"/>
</dbReference>
<dbReference type="RefSeq" id="WP_015850635.1">
    <property type="nucleotide sequence ID" value="NC_012881.1"/>
</dbReference>
<dbReference type="SMR" id="C6BYZ2"/>
<dbReference type="STRING" id="526222.Desal_0750"/>
<dbReference type="KEGG" id="dsa:Desal_0750"/>
<dbReference type="eggNOG" id="COG3303">
    <property type="taxonomic scope" value="Bacteria"/>
</dbReference>
<dbReference type="HOGENOM" id="CLU_035040_1_0_7"/>
<dbReference type="OrthoDB" id="9780421at2"/>
<dbReference type="UniPathway" id="UPA00653"/>
<dbReference type="Proteomes" id="UP000002601">
    <property type="component" value="Chromosome"/>
</dbReference>
<dbReference type="GO" id="GO:0030288">
    <property type="term" value="C:outer membrane-bounded periplasmic space"/>
    <property type="evidence" value="ECO:0007669"/>
    <property type="project" value="TreeGrafter"/>
</dbReference>
<dbReference type="GO" id="GO:0005509">
    <property type="term" value="F:calcium ion binding"/>
    <property type="evidence" value="ECO:0007669"/>
    <property type="project" value="InterPro"/>
</dbReference>
<dbReference type="GO" id="GO:0020037">
    <property type="term" value="F:heme binding"/>
    <property type="evidence" value="ECO:0007669"/>
    <property type="project" value="InterPro"/>
</dbReference>
<dbReference type="GO" id="GO:0042279">
    <property type="term" value="F:nitrite reductase (cytochrome, ammonia-forming) activity"/>
    <property type="evidence" value="ECO:0007669"/>
    <property type="project" value="UniProtKB-EC"/>
</dbReference>
<dbReference type="GO" id="GO:0019645">
    <property type="term" value="P:anaerobic electron transport chain"/>
    <property type="evidence" value="ECO:0007669"/>
    <property type="project" value="TreeGrafter"/>
</dbReference>
<dbReference type="GO" id="GO:0042128">
    <property type="term" value="P:nitrate assimilation"/>
    <property type="evidence" value="ECO:0007669"/>
    <property type="project" value="UniProtKB-UniPathway"/>
</dbReference>
<dbReference type="CDD" id="cd00548">
    <property type="entry name" value="NrfA-like"/>
    <property type="match status" value="1"/>
</dbReference>
<dbReference type="Gene3D" id="1.20.140.10">
    <property type="entry name" value="Butyryl-CoA Dehydrogenase, subunit A, domain 3"/>
    <property type="match status" value="1"/>
</dbReference>
<dbReference type="Gene3D" id="1.10.1130.10">
    <property type="entry name" value="Flavocytochrome C3, Chain A"/>
    <property type="match status" value="1"/>
</dbReference>
<dbReference type="HAMAP" id="MF_01182">
    <property type="entry name" value="Cytochrom_C552"/>
    <property type="match status" value="1"/>
</dbReference>
<dbReference type="InterPro" id="IPR003321">
    <property type="entry name" value="Cyt_c552"/>
</dbReference>
<dbReference type="InterPro" id="IPR017570">
    <property type="entry name" value="Cyt_c_NO2Rdtase_formate-dep"/>
</dbReference>
<dbReference type="InterPro" id="IPR036280">
    <property type="entry name" value="Multihaem_cyt_sf"/>
</dbReference>
<dbReference type="NCBIfam" id="NF008339">
    <property type="entry name" value="PRK11125.1"/>
    <property type="match status" value="1"/>
</dbReference>
<dbReference type="PANTHER" id="PTHR30633:SF0">
    <property type="entry name" value="CYTOCHROME C-552"/>
    <property type="match status" value="1"/>
</dbReference>
<dbReference type="PANTHER" id="PTHR30633">
    <property type="entry name" value="CYTOCHROME C-552 RESPIRATORY NITRITE REDUCTASE"/>
    <property type="match status" value="1"/>
</dbReference>
<dbReference type="Pfam" id="PF02335">
    <property type="entry name" value="Cytochrom_C552"/>
    <property type="match status" value="1"/>
</dbReference>
<dbReference type="PIRSF" id="PIRSF000243">
    <property type="entry name" value="Cyt_c552"/>
    <property type="match status" value="1"/>
</dbReference>
<dbReference type="SUPFAM" id="SSF48695">
    <property type="entry name" value="Multiheme cytochromes"/>
    <property type="match status" value="1"/>
</dbReference>
<dbReference type="PROSITE" id="PS51008">
    <property type="entry name" value="MULTIHEME_CYTC"/>
    <property type="match status" value="1"/>
</dbReference>
<comment type="function">
    <text evidence="1">Catalyzes the reduction of nitrite to ammonia, consuming six electrons in the process.</text>
</comment>
<comment type="catalytic activity">
    <reaction evidence="1">
        <text>6 Fe(III)-[cytochrome c] + NH4(+) + 2 H2O = 6 Fe(II)-[cytochrome c] + nitrite + 8 H(+)</text>
        <dbReference type="Rhea" id="RHEA:13089"/>
        <dbReference type="Rhea" id="RHEA-COMP:10350"/>
        <dbReference type="Rhea" id="RHEA-COMP:14399"/>
        <dbReference type="ChEBI" id="CHEBI:15377"/>
        <dbReference type="ChEBI" id="CHEBI:15378"/>
        <dbReference type="ChEBI" id="CHEBI:16301"/>
        <dbReference type="ChEBI" id="CHEBI:28938"/>
        <dbReference type="ChEBI" id="CHEBI:29033"/>
        <dbReference type="ChEBI" id="CHEBI:29034"/>
        <dbReference type="EC" id="1.7.2.2"/>
    </reaction>
</comment>
<comment type="cofactor">
    <cofactor evidence="1">
        <name>Ca(2+)</name>
        <dbReference type="ChEBI" id="CHEBI:29108"/>
    </cofactor>
    <text evidence="1">Binds 1 Ca(2+) ion per monomer.</text>
</comment>
<comment type="cofactor">
    <cofactor evidence="1">
        <name>heme c</name>
        <dbReference type="ChEBI" id="CHEBI:61717"/>
    </cofactor>
    <text evidence="1">Binds 5 heme c groups covalently per monomer.</text>
</comment>
<comment type="pathway">
    <text evidence="1">Nitrogen metabolism; nitrate reduction (assimilation).</text>
</comment>
<comment type="subcellular location">
    <subcellularLocation>
        <location evidence="1">Periplasm</location>
    </subcellularLocation>
</comment>
<comment type="similarity">
    <text evidence="1">Belongs to the cytochrome c-552 family.</text>
</comment>
<name>NRFA_MARSD</name>
<feature type="signal peptide" evidence="1">
    <location>
        <begin position="1"/>
        <end position="16"/>
    </location>
</feature>
<feature type="chain" id="PRO_1000213760" description="Cytochrome c-552">
    <location>
        <begin position="17"/>
        <end position="503"/>
    </location>
</feature>
<feature type="binding site" description="axial binding residue" evidence="1">
    <location>
        <position position="102"/>
    </location>
    <ligand>
        <name>heme c</name>
        <dbReference type="ChEBI" id="CHEBI:61717"/>
        <label>3</label>
    </ligand>
    <ligandPart>
        <name>Fe</name>
        <dbReference type="ChEBI" id="CHEBI:18248"/>
    </ligandPart>
</feature>
<feature type="binding site" description="covalent" evidence="1">
    <location>
        <position position="130"/>
    </location>
    <ligand>
        <name>heme</name>
        <dbReference type="ChEBI" id="CHEBI:30413"/>
        <label>1</label>
    </ligand>
</feature>
<feature type="binding site" description="covalent" evidence="1">
    <location>
        <position position="133"/>
    </location>
    <ligand>
        <name>heme</name>
        <dbReference type="ChEBI" id="CHEBI:30413"/>
        <label>1</label>
    </ligand>
</feature>
<feature type="binding site" description="axial binding residue" evidence="1">
    <location>
        <position position="134"/>
    </location>
    <ligand>
        <name>heme</name>
        <dbReference type="ChEBI" id="CHEBI:30413"/>
        <label>1</label>
    </ligand>
    <ligandPart>
        <name>Fe</name>
        <dbReference type="ChEBI" id="CHEBI:18248"/>
    </ligandPart>
</feature>
<feature type="binding site" description="covalent" evidence="1">
    <location>
        <position position="168"/>
    </location>
    <ligand>
        <name>heme c</name>
        <dbReference type="ChEBI" id="CHEBI:61717"/>
        <label>2</label>
    </ligand>
</feature>
<feature type="binding site" description="covalent" evidence="1">
    <location>
        <position position="171"/>
    </location>
    <ligand>
        <name>heme c</name>
        <dbReference type="ChEBI" id="CHEBI:61717"/>
        <label>2</label>
    </ligand>
</feature>
<feature type="binding site" description="axial binding residue" evidence="1">
    <location>
        <position position="172"/>
    </location>
    <ligand>
        <name>heme c</name>
        <dbReference type="ChEBI" id="CHEBI:61717"/>
        <label>2</label>
    </ligand>
    <ligandPart>
        <name>Fe</name>
        <dbReference type="ChEBI" id="CHEBI:18248"/>
    </ligandPart>
</feature>
<feature type="binding site" description="covalent" evidence="1">
    <location>
        <position position="210"/>
    </location>
    <ligand>
        <name>heme c</name>
        <dbReference type="ChEBI" id="CHEBI:61717"/>
        <label>3</label>
    </ligand>
</feature>
<feature type="binding site" description="covalent" evidence="1">
    <location>
        <position position="213"/>
    </location>
    <ligand>
        <name>heme c</name>
        <dbReference type="ChEBI" id="CHEBI:61717"/>
        <label>3</label>
    </ligand>
</feature>
<feature type="binding site" description="axial binding residue" evidence="1">
    <location>
        <position position="214"/>
    </location>
    <ligand>
        <name>heme c</name>
        <dbReference type="ChEBI" id="CHEBI:61717"/>
        <label>3</label>
    </ligand>
    <ligandPart>
        <name>Fe</name>
        <dbReference type="ChEBI" id="CHEBI:18248"/>
    </ligandPart>
</feature>
<feature type="binding site" evidence="1">
    <location>
        <position position="216"/>
    </location>
    <ligand>
        <name>Ca(2+)</name>
        <dbReference type="ChEBI" id="CHEBI:29108"/>
    </ligand>
</feature>
<feature type="binding site" evidence="1">
    <location>
        <position position="217"/>
    </location>
    <ligand>
        <name>Ca(2+)</name>
        <dbReference type="ChEBI" id="CHEBI:29108"/>
    </ligand>
</feature>
<feature type="binding site" evidence="1">
    <location>
        <position position="217"/>
    </location>
    <ligand>
        <name>substrate</name>
    </ligand>
</feature>
<feature type="binding site" evidence="1">
    <location>
        <position position="273"/>
    </location>
    <ligand>
        <name>Ca(2+)</name>
        <dbReference type="ChEBI" id="CHEBI:29108"/>
    </ligand>
</feature>
<feature type="binding site" evidence="1">
    <location>
        <position position="275"/>
    </location>
    <ligand>
        <name>Ca(2+)</name>
        <dbReference type="ChEBI" id="CHEBI:29108"/>
    </ligand>
</feature>
<feature type="binding site" evidence="1">
    <location>
        <position position="276"/>
    </location>
    <ligand>
        <name>substrate</name>
    </ligand>
</feature>
<feature type="binding site" description="axial binding residue" evidence="1">
    <location>
        <position position="287"/>
    </location>
    <ligand>
        <name>heme c</name>
        <dbReference type="ChEBI" id="CHEBI:61717"/>
        <label>5</label>
    </ligand>
    <ligandPart>
        <name>Fe</name>
        <dbReference type="ChEBI" id="CHEBI:18248"/>
    </ligandPart>
</feature>
<feature type="binding site" description="covalent" evidence="1">
    <location>
        <position position="294"/>
    </location>
    <ligand>
        <name>heme c</name>
        <dbReference type="ChEBI" id="CHEBI:61717"/>
        <label>4</label>
    </ligand>
</feature>
<feature type="binding site" description="covalent" evidence="1">
    <location>
        <position position="297"/>
    </location>
    <ligand>
        <name>heme c</name>
        <dbReference type="ChEBI" id="CHEBI:61717"/>
        <label>4</label>
    </ligand>
</feature>
<feature type="binding site" description="axial binding residue" evidence="1">
    <location>
        <position position="298"/>
    </location>
    <ligand>
        <name>heme c</name>
        <dbReference type="ChEBI" id="CHEBI:61717"/>
        <label>4</label>
    </ligand>
    <ligandPart>
        <name>Fe</name>
        <dbReference type="ChEBI" id="CHEBI:18248"/>
    </ligandPart>
</feature>
<feature type="binding site" description="axial binding residue" evidence="1">
    <location>
        <position position="312"/>
    </location>
    <ligand>
        <name>heme c</name>
        <dbReference type="ChEBI" id="CHEBI:61717"/>
        <label>2</label>
    </ligand>
    <ligandPart>
        <name>Fe</name>
        <dbReference type="ChEBI" id="CHEBI:18248"/>
    </ligandPart>
</feature>
<feature type="binding site" description="covalent" evidence="1">
    <location>
        <position position="325"/>
    </location>
    <ligand>
        <name>heme c</name>
        <dbReference type="ChEBI" id="CHEBI:61717"/>
        <label>5</label>
    </ligand>
</feature>
<feature type="binding site" description="covalent" evidence="1">
    <location>
        <position position="328"/>
    </location>
    <ligand>
        <name>heme c</name>
        <dbReference type="ChEBI" id="CHEBI:61717"/>
        <label>5</label>
    </ligand>
</feature>
<feature type="binding site" description="axial binding residue" evidence="1">
    <location>
        <position position="329"/>
    </location>
    <ligand>
        <name>heme c</name>
        <dbReference type="ChEBI" id="CHEBI:61717"/>
        <label>5</label>
    </ligand>
    <ligandPart>
        <name>Fe</name>
        <dbReference type="ChEBI" id="CHEBI:18248"/>
    </ligandPart>
</feature>
<feature type="binding site" description="axial binding residue" evidence="1">
    <location>
        <position position="404"/>
    </location>
    <ligand>
        <name>heme c</name>
        <dbReference type="ChEBI" id="CHEBI:61717"/>
        <label>4</label>
    </ligand>
    <ligandPart>
        <name>Fe</name>
        <dbReference type="ChEBI" id="CHEBI:18248"/>
    </ligandPart>
</feature>
<gene>
    <name evidence="1" type="primary">nrfA</name>
    <name type="ordered locus">Desal_0750</name>
</gene>
<organism>
    <name type="scientific">Maridesulfovibrio salexigens (strain ATCC 14822 / DSM 2638 / NCIMB 8403 / VKM B-1763)</name>
    <name type="common">Desulfovibrio salexigens</name>
    <dbReference type="NCBI Taxonomy" id="526222"/>
    <lineage>
        <taxon>Bacteria</taxon>
        <taxon>Pseudomonadati</taxon>
        <taxon>Thermodesulfobacteriota</taxon>
        <taxon>Desulfovibrionia</taxon>
        <taxon>Desulfovibrionales</taxon>
        <taxon>Desulfovibrionaceae</taxon>
        <taxon>Maridesulfovibrio</taxon>
    </lineage>
</organism>
<sequence>MKKNTIILVGALIAIAFMTYMLLSINTRKTEQVLLNTTPVIKEKGVEARSDIWGKEYPRQYDTWKKTKDSNKIEDMVEKYPQLAILWAGYGFAKDYNAPRGHFNALQSNINTLRTGAPTGPNDGPMPMACWSCKSSDVPRIMERDGELQYFTGKWARMGSEIVNPIGCADCHNSQTSQLEISRPYLKRGLEASGRKLEDLTFQDMRSLACAQCHSEYYFKKTPYTDEAGNKQVAAVVTFPWAKGLAAENMEEYYNEYGFKDWTHGISKTPMLKAQHPGYEIFTTGIHFKRGLSCADCHMPYTQEGSVKFSDHQIQDPLNNIANSCLTCHRQSEEEFKQIVEEKLKRKDQLNVIAMNSLANAHLLAKKAWEVGATEAEMEKPINTIRSAQWLWDYSIASHGSFFHAPGETLRLLGVANNKAMQARLELQNILANHGVTDYEVPDFSTKEKAQKLAGVPFDKLVKEKMRFKKGMVVEWYDEAVKAGRLDKNWWKILPDNTAYPQN</sequence>
<evidence type="ECO:0000255" key="1">
    <source>
        <dbReference type="HAMAP-Rule" id="MF_01182"/>
    </source>
</evidence>
<keyword id="KW-0106">Calcium</keyword>
<keyword id="KW-0249">Electron transport</keyword>
<keyword id="KW-0349">Heme</keyword>
<keyword id="KW-0408">Iron</keyword>
<keyword id="KW-0479">Metal-binding</keyword>
<keyword id="KW-0560">Oxidoreductase</keyword>
<keyword id="KW-0574">Periplasm</keyword>
<keyword id="KW-1185">Reference proteome</keyword>
<keyword id="KW-0732">Signal</keyword>
<keyword id="KW-0813">Transport</keyword>
<proteinExistence type="inferred from homology"/>
<accession>C6BYZ2</accession>
<protein>
    <recommendedName>
        <fullName evidence="1">Cytochrome c-552</fullName>
        <ecNumber evidence="1">1.7.2.2</ecNumber>
    </recommendedName>
    <alternativeName>
        <fullName evidence="1">Ammonia-forming cytochrome c nitrite reductase</fullName>
        <shortName evidence="1">Cytochrome c nitrite reductase</shortName>
    </alternativeName>
</protein>